<comment type="function">
    <text evidence="1">Catalyzes the ATP-dependent amidation of deamido-NAD to form NAD. Uses ammonia as a nitrogen source.</text>
</comment>
<comment type="catalytic activity">
    <reaction evidence="1">
        <text>deamido-NAD(+) + NH4(+) + ATP = AMP + diphosphate + NAD(+) + H(+)</text>
        <dbReference type="Rhea" id="RHEA:21188"/>
        <dbReference type="ChEBI" id="CHEBI:15378"/>
        <dbReference type="ChEBI" id="CHEBI:28938"/>
        <dbReference type="ChEBI" id="CHEBI:30616"/>
        <dbReference type="ChEBI" id="CHEBI:33019"/>
        <dbReference type="ChEBI" id="CHEBI:57540"/>
        <dbReference type="ChEBI" id="CHEBI:58437"/>
        <dbReference type="ChEBI" id="CHEBI:456215"/>
        <dbReference type="EC" id="6.3.1.5"/>
    </reaction>
</comment>
<comment type="pathway">
    <text evidence="1">Cofactor biosynthesis; NAD(+) biosynthesis; NAD(+) from deamido-NAD(+) (ammonia route): step 1/1.</text>
</comment>
<comment type="subunit">
    <text evidence="1">Homodimer.</text>
</comment>
<comment type="similarity">
    <text evidence="1">Belongs to the NAD synthetase family.</text>
</comment>
<dbReference type="EC" id="6.3.1.5" evidence="1"/>
<dbReference type="EMBL" id="FM200053">
    <property type="protein sequence ID" value="CAR59604.1"/>
    <property type="molecule type" value="Genomic_DNA"/>
</dbReference>
<dbReference type="RefSeq" id="WP_000174983.1">
    <property type="nucleotide sequence ID" value="NC_011147.1"/>
</dbReference>
<dbReference type="SMR" id="B5BA65"/>
<dbReference type="KEGG" id="sek:SSPA1425"/>
<dbReference type="HOGENOM" id="CLU_059327_3_0_6"/>
<dbReference type="UniPathway" id="UPA00253">
    <property type="reaction ID" value="UER00333"/>
</dbReference>
<dbReference type="Proteomes" id="UP000001869">
    <property type="component" value="Chromosome"/>
</dbReference>
<dbReference type="GO" id="GO:0005737">
    <property type="term" value="C:cytoplasm"/>
    <property type="evidence" value="ECO:0007669"/>
    <property type="project" value="InterPro"/>
</dbReference>
<dbReference type="GO" id="GO:0005524">
    <property type="term" value="F:ATP binding"/>
    <property type="evidence" value="ECO:0007669"/>
    <property type="project" value="UniProtKB-UniRule"/>
</dbReference>
<dbReference type="GO" id="GO:0004359">
    <property type="term" value="F:glutaminase activity"/>
    <property type="evidence" value="ECO:0007669"/>
    <property type="project" value="InterPro"/>
</dbReference>
<dbReference type="GO" id="GO:0046872">
    <property type="term" value="F:metal ion binding"/>
    <property type="evidence" value="ECO:0007669"/>
    <property type="project" value="UniProtKB-KW"/>
</dbReference>
<dbReference type="GO" id="GO:0003952">
    <property type="term" value="F:NAD+ synthase (glutamine-hydrolyzing) activity"/>
    <property type="evidence" value="ECO:0007669"/>
    <property type="project" value="InterPro"/>
</dbReference>
<dbReference type="GO" id="GO:0008795">
    <property type="term" value="F:NAD+ synthase activity"/>
    <property type="evidence" value="ECO:0007669"/>
    <property type="project" value="UniProtKB-UniRule"/>
</dbReference>
<dbReference type="GO" id="GO:0009435">
    <property type="term" value="P:NAD biosynthetic process"/>
    <property type="evidence" value="ECO:0007669"/>
    <property type="project" value="UniProtKB-UniRule"/>
</dbReference>
<dbReference type="CDD" id="cd00553">
    <property type="entry name" value="NAD_synthase"/>
    <property type="match status" value="1"/>
</dbReference>
<dbReference type="FunFam" id="3.40.50.620:FF:000015">
    <property type="entry name" value="NH(3)-dependent NAD(+) synthetase"/>
    <property type="match status" value="1"/>
</dbReference>
<dbReference type="Gene3D" id="3.40.50.620">
    <property type="entry name" value="HUPs"/>
    <property type="match status" value="1"/>
</dbReference>
<dbReference type="HAMAP" id="MF_00193">
    <property type="entry name" value="NadE_ammonia_dep"/>
    <property type="match status" value="1"/>
</dbReference>
<dbReference type="InterPro" id="IPR022310">
    <property type="entry name" value="NAD/GMP_synthase"/>
</dbReference>
<dbReference type="InterPro" id="IPR003694">
    <property type="entry name" value="NAD_synthase"/>
</dbReference>
<dbReference type="InterPro" id="IPR022926">
    <property type="entry name" value="NH(3)-dep_NAD(+)_synth"/>
</dbReference>
<dbReference type="InterPro" id="IPR014729">
    <property type="entry name" value="Rossmann-like_a/b/a_fold"/>
</dbReference>
<dbReference type="NCBIfam" id="TIGR00552">
    <property type="entry name" value="nadE"/>
    <property type="match status" value="1"/>
</dbReference>
<dbReference type="NCBIfam" id="NF001979">
    <property type="entry name" value="PRK00768.1"/>
    <property type="match status" value="1"/>
</dbReference>
<dbReference type="PANTHER" id="PTHR23090">
    <property type="entry name" value="NH 3 /GLUTAMINE-DEPENDENT NAD + SYNTHETASE"/>
    <property type="match status" value="1"/>
</dbReference>
<dbReference type="PANTHER" id="PTHR23090:SF7">
    <property type="entry name" value="NH(3)-DEPENDENT NAD(+) SYNTHETASE"/>
    <property type="match status" value="1"/>
</dbReference>
<dbReference type="Pfam" id="PF02540">
    <property type="entry name" value="NAD_synthase"/>
    <property type="match status" value="1"/>
</dbReference>
<dbReference type="SUPFAM" id="SSF52402">
    <property type="entry name" value="Adenine nucleotide alpha hydrolases-like"/>
    <property type="match status" value="1"/>
</dbReference>
<evidence type="ECO:0000255" key="1">
    <source>
        <dbReference type="HAMAP-Rule" id="MF_00193"/>
    </source>
</evidence>
<sequence>MTLQQEIIQALGAKPHINPEEEIRRSVDFLKAYLKTYPFLKSLVLGISGGQDSTLAGKLSQMAIAELREETGDNALQFIAVRLPYGVQADEQDCQDAIAFIQPDRVLTVNIKGAVLASEQALREAGIELSDFVRGNEKARERMKAQYSIAGMTHGVVVGTDHAAEAITGFFTKYGDGGTDINPLHRLNKRQGKQLLAALGCPEHLYKKVPTADLEDDRPSLPDEAALGVTYDNIDDYLEGKTLDSAIAKTIEGWYVKTEHKRRLPITVFDDFWKR</sequence>
<keyword id="KW-0067">ATP-binding</keyword>
<keyword id="KW-0436">Ligase</keyword>
<keyword id="KW-0460">Magnesium</keyword>
<keyword id="KW-0479">Metal-binding</keyword>
<keyword id="KW-0520">NAD</keyword>
<keyword id="KW-0547">Nucleotide-binding</keyword>
<name>NADE_SALPK</name>
<proteinExistence type="inferred from homology"/>
<reference key="1">
    <citation type="journal article" date="2009" name="BMC Genomics">
        <title>Pseudogene accumulation in the evolutionary histories of Salmonella enterica serovars Paratyphi A and Typhi.</title>
        <authorList>
            <person name="Holt K.E."/>
            <person name="Thomson N.R."/>
            <person name="Wain J."/>
            <person name="Langridge G.C."/>
            <person name="Hasan R."/>
            <person name="Bhutta Z.A."/>
            <person name="Quail M.A."/>
            <person name="Norbertczak H."/>
            <person name="Walker D."/>
            <person name="Simmonds M."/>
            <person name="White B."/>
            <person name="Bason N."/>
            <person name="Mungall K."/>
            <person name="Dougan G."/>
            <person name="Parkhill J."/>
        </authorList>
    </citation>
    <scope>NUCLEOTIDE SEQUENCE [LARGE SCALE GENOMIC DNA]</scope>
    <source>
        <strain>AKU_12601</strain>
    </source>
</reference>
<organism>
    <name type="scientific">Salmonella paratyphi A (strain AKU_12601)</name>
    <dbReference type="NCBI Taxonomy" id="554290"/>
    <lineage>
        <taxon>Bacteria</taxon>
        <taxon>Pseudomonadati</taxon>
        <taxon>Pseudomonadota</taxon>
        <taxon>Gammaproteobacteria</taxon>
        <taxon>Enterobacterales</taxon>
        <taxon>Enterobacteriaceae</taxon>
        <taxon>Salmonella</taxon>
    </lineage>
</organism>
<accession>B5BA65</accession>
<protein>
    <recommendedName>
        <fullName evidence="1">NH(3)-dependent NAD(+) synthetase</fullName>
        <ecNumber evidence="1">6.3.1.5</ecNumber>
    </recommendedName>
</protein>
<feature type="chain" id="PRO_1000099043" description="NH(3)-dependent NAD(+) synthetase">
    <location>
        <begin position="1"/>
        <end position="275"/>
    </location>
</feature>
<feature type="binding site" evidence="1">
    <location>
        <begin position="46"/>
        <end position="53"/>
    </location>
    <ligand>
        <name>ATP</name>
        <dbReference type="ChEBI" id="CHEBI:30616"/>
    </ligand>
</feature>
<feature type="binding site" evidence="1">
    <location>
        <position position="52"/>
    </location>
    <ligand>
        <name>Mg(2+)</name>
        <dbReference type="ChEBI" id="CHEBI:18420"/>
    </ligand>
</feature>
<feature type="binding site" evidence="1">
    <location>
        <position position="140"/>
    </location>
    <ligand>
        <name>deamido-NAD(+)</name>
        <dbReference type="ChEBI" id="CHEBI:58437"/>
    </ligand>
</feature>
<feature type="binding site" evidence="1">
    <location>
        <position position="160"/>
    </location>
    <ligand>
        <name>ATP</name>
        <dbReference type="ChEBI" id="CHEBI:30616"/>
    </ligand>
</feature>
<feature type="binding site" evidence="1">
    <location>
        <position position="165"/>
    </location>
    <ligand>
        <name>Mg(2+)</name>
        <dbReference type="ChEBI" id="CHEBI:18420"/>
    </ligand>
</feature>
<feature type="binding site" evidence="1">
    <location>
        <position position="173"/>
    </location>
    <ligand>
        <name>deamido-NAD(+)</name>
        <dbReference type="ChEBI" id="CHEBI:58437"/>
    </ligand>
</feature>
<feature type="binding site" evidence="1">
    <location>
        <position position="180"/>
    </location>
    <ligand>
        <name>deamido-NAD(+)</name>
        <dbReference type="ChEBI" id="CHEBI:58437"/>
    </ligand>
</feature>
<feature type="binding site" evidence="1">
    <location>
        <position position="189"/>
    </location>
    <ligand>
        <name>ATP</name>
        <dbReference type="ChEBI" id="CHEBI:30616"/>
    </ligand>
</feature>
<feature type="binding site" evidence="1">
    <location>
        <position position="211"/>
    </location>
    <ligand>
        <name>ATP</name>
        <dbReference type="ChEBI" id="CHEBI:30616"/>
    </ligand>
</feature>
<feature type="binding site" evidence="1">
    <location>
        <begin position="260"/>
        <end position="261"/>
    </location>
    <ligand>
        <name>deamido-NAD(+)</name>
        <dbReference type="ChEBI" id="CHEBI:58437"/>
    </ligand>
</feature>
<gene>
    <name evidence="1" type="primary">nadE</name>
    <name type="ordered locus">SSPA1425</name>
</gene>